<accession>B7JIE0</accession>
<protein>
    <recommendedName>
        <fullName evidence="1">RNA-binding protein Hfq</fullName>
    </recommendedName>
</protein>
<sequence length="74" mass="8646">MKQSINIQDQFLNQLRKENTFVTLYLLNGFQLRGLIKGFDNFTVLLETEGKQQLIYKHAISTFVPQKNVSIELE</sequence>
<name>HFQ_BACC0</name>
<gene>
    <name evidence="1" type="primary">hfq</name>
    <name type="ordered locus">BCAH820_3722</name>
</gene>
<reference key="1">
    <citation type="submission" date="2008-10" db="EMBL/GenBank/DDBJ databases">
        <title>Genome sequence of Bacillus cereus AH820.</title>
        <authorList>
            <person name="Dodson R.J."/>
            <person name="Durkin A.S."/>
            <person name="Rosovitz M.J."/>
            <person name="Rasko D.A."/>
            <person name="Hoffmaster A."/>
            <person name="Ravel J."/>
            <person name="Sutton G."/>
        </authorList>
    </citation>
    <scope>NUCLEOTIDE SEQUENCE [LARGE SCALE GENOMIC DNA]</scope>
    <source>
        <strain>AH820</strain>
    </source>
</reference>
<dbReference type="EMBL" id="CP001283">
    <property type="protein sequence ID" value="ACK91311.1"/>
    <property type="molecule type" value="Genomic_DNA"/>
</dbReference>
<dbReference type="RefSeq" id="WP_000813896.1">
    <property type="nucleotide sequence ID" value="NC_011773.1"/>
</dbReference>
<dbReference type="SMR" id="B7JIE0"/>
<dbReference type="GeneID" id="93007416"/>
<dbReference type="KEGG" id="bcu:BCAH820_3722"/>
<dbReference type="HOGENOM" id="CLU_113688_3_0_9"/>
<dbReference type="Proteomes" id="UP000001363">
    <property type="component" value="Chromosome"/>
</dbReference>
<dbReference type="GO" id="GO:0005829">
    <property type="term" value="C:cytosol"/>
    <property type="evidence" value="ECO:0007669"/>
    <property type="project" value="TreeGrafter"/>
</dbReference>
<dbReference type="GO" id="GO:0003723">
    <property type="term" value="F:RNA binding"/>
    <property type="evidence" value="ECO:0007669"/>
    <property type="project" value="UniProtKB-UniRule"/>
</dbReference>
<dbReference type="GO" id="GO:0006355">
    <property type="term" value="P:regulation of DNA-templated transcription"/>
    <property type="evidence" value="ECO:0007669"/>
    <property type="project" value="InterPro"/>
</dbReference>
<dbReference type="GO" id="GO:0043487">
    <property type="term" value="P:regulation of RNA stability"/>
    <property type="evidence" value="ECO:0007669"/>
    <property type="project" value="TreeGrafter"/>
</dbReference>
<dbReference type="GO" id="GO:0045974">
    <property type="term" value="P:regulation of translation, ncRNA-mediated"/>
    <property type="evidence" value="ECO:0007669"/>
    <property type="project" value="TreeGrafter"/>
</dbReference>
<dbReference type="CDD" id="cd01716">
    <property type="entry name" value="Hfq"/>
    <property type="match status" value="1"/>
</dbReference>
<dbReference type="FunFam" id="2.30.30.100:FF:000012">
    <property type="entry name" value="RNA-binding protein Hfq"/>
    <property type="match status" value="1"/>
</dbReference>
<dbReference type="Gene3D" id="2.30.30.100">
    <property type="match status" value="1"/>
</dbReference>
<dbReference type="HAMAP" id="MF_00436">
    <property type="entry name" value="Hfq"/>
    <property type="match status" value="1"/>
</dbReference>
<dbReference type="InterPro" id="IPR005001">
    <property type="entry name" value="Hfq"/>
</dbReference>
<dbReference type="InterPro" id="IPR010920">
    <property type="entry name" value="LSM_dom_sf"/>
</dbReference>
<dbReference type="InterPro" id="IPR047575">
    <property type="entry name" value="Sm"/>
</dbReference>
<dbReference type="NCBIfam" id="TIGR02383">
    <property type="entry name" value="Hfq"/>
    <property type="match status" value="1"/>
</dbReference>
<dbReference type="NCBIfam" id="NF001602">
    <property type="entry name" value="PRK00395.1"/>
    <property type="match status" value="1"/>
</dbReference>
<dbReference type="PANTHER" id="PTHR34772">
    <property type="entry name" value="RNA-BINDING PROTEIN HFQ"/>
    <property type="match status" value="1"/>
</dbReference>
<dbReference type="PANTHER" id="PTHR34772:SF1">
    <property type="entry name" value="RNA-BINDING PROTEIN HFQ"/>
    <property type="match status" value="1"/>
</dbReference>
<dbReference type="Pfam" id="PF17209">
    <property type="entry name" value="Hfq"/>
    <property type="match status" value="1"/>
</dbReference>
<dbReference type="SUPFAM" id="SSF50182">
    <property type="entry name" value="Sm-like ribonucleoproteins"/>
    <property type="match status" value="1"/>
</dbReference>
<dbReference type="PROSITE" id="PS52002">
    <property type="entry name" value="SM"/>
    <property type="match status" value="1"/>
</dbReference>
<organism>
    <name type="scientific">Bacillus cereus (strain AH820)</name>
    <dbReference type="NCBI Taxonomy" id="405535"/>
    <lineage>
        <taxon>Bacteria</taxon>
        <taxon>Bacillati</taxon>
        <taxon>Bacillota</taxon>
        <taxon>Bacilli</taxon>
        <taxon>Bacillales</taxon>
        <taxon>Bacillaceae</taxon>
        <taxon>Bacillus</taxon>
        <taxon>Bacillus cereus group</taxon>
    </lineage>
</organism>
<feature type="chain" id="PRO_1000190303" description="RNA-binding protein Hfq">
    <location>
        <begin position="1"/>
        <end position="74"/>
    </location>
</feature>
<feature type="domain" description="Sm" evidence="2">
    <location>
        <begin position="9"/>
        <end position="69"/>
    </location>
</feature>
<keyword id="KW-0694">RNA-binding</keyword>
<keyword id="KW-0346">Stress response</keyword>
<evidence type="ECO:0000255" key="1">
    <source>
        <dbReference type="HAMAP-Rule" id="MF_00436"/>
    </source>
</evidence>
<evidence type="ECO:0000255" key="2">
    <source>
        <dbReference type="PROSITE-ProRule" id="PRU01346"/>
    </source>
</evidence>
<proteinExistence type="inferred from homology"/>
<comment type="function">
    <text evidence="1">RNA chaperone that binds small regulatory RNA (sRNAs) and mRNAs to facilitate mRNA translational regulation in response to envelope stress, environmental stress and changes in metabolite concentrations. Also binds with high specificity to tRNAs.</text>
</comment>
<comment type="subunit">
    <text evidence="1">Homohexamer.</text>
</comment>
<comment type="similarity">
    <text evidence="1">Belongs to the Hfq family.</text>
</comment>